<feature type="chain" id="PRO_1000144243" description="Large ribosomal subunit protein uL14">
    <location>
        <begin position="1"/>
        <end position="122"/>
    </location>
</feature>
<dbReference type="EMBL" id="AM884177">
    <property type="protein sequence ID" value="CAP07172.1"/>
    <property type="molecule type" value="Genomic_DNA"/>
</dbReference>
<dbReference type="RefSeq" id="WP_009873871.1">
    <property type="nucleotide sequence ID" value="NC_010280.2"/>
</dbReference>
<dbReference type="SMR" id="B0BCF7"/>
<dbReference type="KEGG" id="ctl:CTLon_0775"/>
<dbReference type="HOGENOM" id="CLU_095071_2_1_0"/>
<dbReference type="Proteomes" id="UP001154401">
    <property type="component" value="Chromosome"/>
</dbReference>
<dbReference type="GO" id="GO:0022625">
    <property type="term" value="C:cytosolic large ribosomal subunit"/>
    <property type="evidence" value="ECO:0007669"/>
    <property type="project" value="TreeGrafter"/>
</dbReference>
<dbReference type="GO" id="GO:0070180">
    <property type="term" value="F:large ribosomal subunit rRNA binding"/>
    <property type="evidence" value="ECO:0007669"/>
    <property type="project" value="TreeGrafter"/>
</dbReference>
<dbReference type="GO" id="GO:0003735">
    <property type="term" value="F:structural constituent of ribosome"/>
    <property type="evidence" value="ECO:0007669"/>
    <property type="project" value="InterPro"/>
</dbReference>
<dbReference type="GO" id="GO:0006412">
    <property type="term" value="P:translation"/>
    <property type="evidence" value="ECO:0007669"/>
    <property type="project" value="UniProtKB-UniRule"/>
</dbReference>
<dbReference type="CDD" id="cd00337">
    <property type="entry name" value="Ribosomal_uL14"/>
    <property type="match status" value="1"/>
</dbReference>
<dbReference type="FunFam" id="2.40.150.20:FF:000001">
    <property type="entry name" value="50S ribosomal protein L14"/>
    <property type="match status" value="1"/>
</dbReference>
<dbReference type="Gene3D" id="2.40.150.20">
    <property type="entry name" value="Ribosomal protein L14"/>
    <property type="match status" value="1"/>
</dbReference>
<dbReference type="HAMAP" id="MF_01367">
    <property type="entry name" value="Ribosomal_uL14"/>
    <property type="match status" value="1"/>
</dbReference>
<dbReference type="InterPro" id="IPR000218">
    <property type="entry name" value="Ribosomal_uL14"/>
</dbReference>
<dbReference type="InterPro" id="IPR005745">
    <property type="entry name" value="Ribosomal_uL14_bac-type"/>
</dbReference>
<dbReference type="InterPro" id="IPR019972">
    <property type="entry name" value="Ribosomal_uL14_CS"/>
</dbReference>
<dbReference type="InterPro" id="IPR036853">
    <property type="entry name" value="Ribosomal_uL14_sf"/>
</dbReference>
<dbReference type="NCBIfam" id="TIGR01067">
    <property type="entry name" value="rplN_bact"/>
    <property type="match status" value="1"/>
</dbReference>
<dbReference type="PANTHER" id="PTHR11761">
    <property type="entry name" value="50S/60S RIBOSOMAL PROTEIN L14/L23"/>
    <property type="match status" value="1"/>
</dbReference>
<dbReference type="PANTHER" id="PTHR11761:SF3">
    <property type="entry name" value="LARGE RIBOSOMAL SUBUNIT PROTEIN UL14M"/>
    <property type="match status" value="1"/>
</dbReference>
<dbReference type="Pfam" id="PF00238">
    <property type="entry name" value="Ribosomal_L14"/>
    <property type="match status" value="1"/>
</dbReference>
<dbReference type="SMART" id="SM01374">
    <property type="entry name" value="Ribosomal_L14"/>
    <property type="match status" value="1"/>
</dbReference>
<dbReference type="SUPFAM" id="SSF50193">
    <property type="entry name" value="Ribosomal protein L14"/>
    <property type="match status" value="1"/>
</dbReference>
<dbReference type="PROSITE" id="PS00049">
    <property type="entry name" value="RIBOSOMAL_L14"/>
    <property type="match status" value="1"/>
</dbReference>
<reference key="1">
    <citation type="journal article" date="2008" name="Genome Res.">
        <title>Chlamydia trachomatis: genome sequence analysis of lymphogranuloma venereum isolates.</title>
        <authorList>
            <person name="Thomson N.R."/>
            <person name="Holden M.T.G."/>
            <person name="Carder C."/>
            <person name="Lennard N."/>
            <person name="Lockey S.J."/>
            <person name="Marsh P."/>
            <person name="Skipp P."/>
            <person name="O'Connor C.D."/>
            <person name="Goodhead I."/>
            <person name="Norbertzcak H."/>
            <person name="Harris B."/>
            <person name="Ormond D."/>
            <person name="Rance R."/>
            <person name="Quail M.A."/>
            <person name="Parkhill J."/>
            <person name="Stephens R.S."/>
            <person name="Clarke I.N."/>
        </authorList>
    </citation>
    <scope>NUCLEOTIDE SEQUENCE [LARGE SCALE GENOMIC DNA]</scope>
    <source>
        <strain>UCH-1/proctitis</strain>
    </source>
</reference>
<keyword id="KW-0687">Ribonucleoprotein</keyword>
<keyword id="KW-0689">Ribosomal protein</keyword>
<keyword id="KW-0694">RNA-binding</keyword>
<keyword id="KW-0699">rRNA-binding</keyword>
<sequence>MIQQESQLKVADNTGAKKVKCFKVLGGSRRRYATVGDVIVCSVRDIEPDSSVKKGDVVKAVIVRTRNDIHRKDGSTLRFDTNSCVIIDDKGNPKGTRIFGPVAREIRDRGFVKISSLAPEVI</sequence>
<protein>
    <recommendedName>
        <fullName evidence="1">Large ribosomal subunit protein uL14</fullName>
    </recommendedName>
    <alternativeName>
        <fullName evidence="2">50S ribosomal protein L14</fullName>
    </alternativeName>
</protein>
<comment type="function">
    <text evidence="1">Binds to 23S rRNA. Forms part of two intersubunit bridges in the 70S ribosome.</text>
</comment>
<comment type="subunit">
    <text evidence="1">Part of the 50S ribosomal subunit. Forms a cluster with proteins L3 and L19. In the 70S ribosome, L14 and L19 interact and together make contacts with the 16S rRNA in bridges B5 and B8.</text>
</comment>
<comment type="similarity">
    <text evidence="1">Belongs to the universal ribosomal protein uL14 family.</text>
</comment>
<proteinExistence type="inferred from homology"/>
<organism>
    <name type="scientific">Chlamydia trachomatis serovar L2b (strain UCH-1/proctitis)</name>
    <dbReference type="NCBI Taxonomy" id="471473"/>
    <lineage>
        <taxon>Bacteria</taxon>
        <taxon>Pseudomonadati</taxon>
        <taxon>Chlamydiota</taxon>
        <taxon>Chlamydiia</taxon>
        <taxon>Chlamydiales</taxon>
        <taxon>Chlamydiaceae</taxon>
        <taxon>Chlamydia/Chlamydophila group</taxon>
        <taxon>Chlamydia</taxon>
    </lineage>
</organism>
<evidence type="ECO:0000255" key="1">
    <source>
        <dbReference type="HAMAP-Rule" id="MF_01367"/>
    </source>
</evidence>
<evidence type="ECO:0000305" key="2"/>
<name>RL14_CHLTB</name>
<accession>B0BCF7</accession>
<gene>
    <name evidence="1" type="primary">rplN</name>
    <name type="ordered locus">CTLon_0775</name>
</gene>